<feature type="chain" id="PRO_0000176856" description="Small ribosomal subunit protein bS6">
    <location>
        <begin position="1"/>
        <end position="95"/>
    </location>
</feature>
<proteinExistence type="inferred from homology"/>
<dbReference type="EMBL" id="AP006840">
    <property type="protein sequence ID" value="BAD42302.1"/>
    <property type="molecule type" value="Genomic_DNA"/>
</dbReference>
<dbReference type="RefSeq" id="WP_011197432.1">
    <property type="nucleotide sequence ID" value="NC_006177.1"/>
</dbReference>
<dbReference type="SMR" id="Q67J48"/>
<dbReference type="STRING" id="292459.STH3321"/>
<dbReference type="KEGG" id="sth:STH3321"/>
<dbReference type="eggNOG" id="COG0360">
    <property type="taxonomic scope" value="Bacteria"/>
</dbReference>
<dbReference type="HOGENOM" id="CLU_113441_5_3_9"/>
<dbReference type="OrthoDB" id="9812702at2"/>
<dbReference type="Proteomes" id="UP000000417">
    <property type="component" value="Chromosome"/>
</dbReference>
<dbReference type="GO" id="GO:0005737">
    <property type="term" value="C:cytoplasm"/>
    <property type="evidence" value="ECO:0007669"/>
    <property type="project" value="UniProtKB-ARBA"/>
</dbReference>
<dbReference type="GO" id="GO:1990904">
    <property type="term" value="C:ribonucleoprotein complex"/>
    <property type="evidence" value="ECO:0007669"/>
    <property type="project" value="UniProtKB-KW"/>
</dbReference>
<dbReference type="GO" id="GO:0005840">
    <property type="term" value="C:ribosome"/>
    <property type="evidence" value="ECO:0007669"/>
    <property type="project" value="UniProtKB-KW"/>
</dbReference>
<dbReference type="GO" id="GO:0070181">
    <property type="term" value="F:small ribosomal subunit rRNA binding"/>
    <property type="evidence" value="ECO:0007669"/>
    <property type="project" value="TreeGrafter"/>
</dbReference>
<dbReference type="GO" id="GO:0003735">
    <property type="term" value="F:structural constituent of ribosome"/>
    <property type="evidence" value="ECO:0007669"/>
    <property type="project" value="InterPro"/>
</dbReference>
<dbReference type="GO" id="GO:0006412">
    <property type="term" value="P:translation"/>
    <property type="evidence" value="ECO:0007669"/>
    <property type="project" value="UniProtKB-UniRule"/>
</dbReference>
<dbReference type="CDD" id="cd00473">
    <property type="entry name" value="bS6"/>
    <property type="match status" value="1"/>
</dbReference>
<dbReference type="Gene3D" id="3.30.70.60">
    <property type="match status" value="1"/>
</dbReference>
<dbReference type="HAMAP" id="MF_00360">
    <property type="entry name" value="Ribosomal_bS6"/>
    <property type="match status" value="1"/>
</dbReference>
<dbReference type="InterPro" id="IPR000529">
    <property type="entry name" value="Ribosomal_bS6"/>
</dbReference>
<dbReference type="InterPro" id="IPR035980">
    <property type="entry name" value="Ribosomal_bS6_sf"/>
</dbReference>
<dbReference type="InterPro" id="IPR020814">
    <property type="entry name" value="Ribosomal_S6_plastid/chlpt"/>
</dbReference>
<dbReference type="InterPro" id="IPR014717">
    <property type="entry name" value="Transl_elong_EF1B/ribsomal_bS6"/>
</dbReference>
<dbReference type="NCBIfam" id="TIGR00166">
    <property type="entry name" value="S6"/>
    <property type="match status" value="1"/>
</dbReference>
<dbReference type="PANTHER" id="PTHR21011">
    <property type="entry name" value="MITOCHONDRIAL 28S RIBOSOMAL PROTEIN S6"/>
    <property type="match status" value="1"/>
</dbReference>
<dbReference type="PANTHER" id="PTHR21011:SF1">
    <property type="entry name" value="SMALL RIBOSOMAL SUBUNIT PROTEIN BS6M"/>
    <property type="match status" value="1"/>
</dbReference>
<dbReference type="Pfam" id="PF01250">
    <property type="entry name" value="Ribosomal_S6"/>
    <property type="match status" value="1"/>
</dbReference>
<dbReference type="SUPFAM" id="SSF54995">
    <property type="entry name" value="Ribosomal protein S6"/>
    <property type="match status" value="1"/>
</dbReference>
<sequence>MRKYEMMVIARPDLDEAGLQALSDKIAELITSNGGTVESQDAWKKQRLAYEIKHLREGFYSVFNFTGEPRTANELNRVLKITDEVVRFLIVRPAE</sequence>
<protein>
    <recommendedName>
        <fullName evidence="1">Small ribosomal subunit protein bS6</fullName>
    </recommendedName>
    <alternativeName>
        <fullName evidence="2">30S ribosomal protein S6</fullName>
    </alternativeName>
</protein>
<accession>Q67J48</accession>
<reference key="1">
    <citation type="journal article" date="2004" name="Nucleic Acids Res.">
        <title>Genome sequence of Symbiobacterium thermophilum, an uncultivable bacterium that depends on microbial commensalism.</title>
        <authorList>
            <person name="Ueda K."/>
            <person name="Yamashita A."/>
            <person name="Ishikawa J."/>
            <person name="Shimada M."/>
            <person name="Watsuji T."/>
            <person name="Morimura K."/>
            <person name="Ikeda H."/>
            <person name="Hattori M."/>
            <person name="Beppu T."/>
        </authorList>
    </citation>
    <scope>NUCLEOTIDE SEQUENCE [LARGE SCALE GENOMIC DNA]</scope>
    <source>
        <strain>DSM 24528 / JCM 14929 / IAM 14863 / T</strain>
    </source>
</reference>
<name>RS6_SYMTH</name>
<evidence type="ECO:0000255" key="1">
    <source>
        <dbReference type="HAMAP-Rule" id="MF_00360"/>
    </source>
</evidence>
<evidence type="ECO:0000305" key="2"/>
<comment type="function">
    <text evidence="1">Binds together with bS18 to 16S ribosomal RNA.</text>
</comment>
<comment type="similarity">
    <text evidence="1">Belongs to the bacterial ribosomal protein bS6 family.</text>
</comment>
<keyword id="KW-1185">Reference proteome</keyword>
<keyword id="KW-0687">Ribonucleoprotein</keyword>
<keyword id="KW-0689">Ribosomal protein</keyword>
<keyword id="KW-0694">RNA-binding</keyword>
<keyword id="KW-0699">rRNA-binding</keyword>
<gene>
    <name evidence="1" type="primary">rpsF</name>
    <name type="ordered locus">STH3321</name>
</gene>
<organism>
    <name type="scientific">Symbiobacterium thermophilum (strain DSM 24528 / JCM 14929 / IAM 14863 / T)</name>
    <dbReference type="NCBI Taxonomy" id="292459"/>
    <lineage>
        <taxon>Bacteria</taxon>
        <taxon>Bacillati</taxon>
        <taxon>Bacillota</taxon>
        <taxon>Clostridia</taxon>
        <taxon>Eubacteriales</taxon>
        <taxon>Symbiobacteriaceae</taxon>
        <taxon>Symbiobacterium</taxon>
    </lineage>
</organism>